<feature type="chain" id="PRO_0000161081" description="Elongation factor Ts">
    <location>
        <begin position="1"/>
        <end position="307"/>
    </location>
</feature>
<feature type="region of interest" description="Involved in Mg(2+) ion dislocation from EF-Tu" evidence="1">
    <location>
        <begin position="79"/>
        <end position="82"/>
    </location>
</feature>
<feature type="sequence conflict" description="In Ref. 1; AAD39149." evidence="2" ref="1">
    <original>E</original>
    <variation>Q</variation>
    <location>
        <position position="122"/>
    </location>
</feature>
<feature type="sequence conflict" description="In Ref. 1; AAD39149." evidence="2" ref="1">
    <original>E</original>
    <variation>K</variation>
    <location>
        <position position="300"/>
    </location>
</feature>
<protein>
    <recommendedName>
        <fullName>Elongation factor Ts</fullName>
        <shortName>EF-Ts</shortName>
    </recommendedName>
</protein>
<accession>Q9XCM5</accession>
<accession>Q6FZN1</accession>
<evidence type="ECO:0000250" key="1"/>
<evidence type="ECO:0000305" key="2"/>
<proteinExistence type="inferred from homology"/>
<gene>
    <name type="primary">tsf</name>
    <name type="ordered locus">BQ07000</name>
</gene>
<reference key="1">
    <citation type="submission" date="1999-03" db="EMBL/GenBank/DDBJ databases">
        <title>Cloning and characterization of elongation factor-ts (EF-ts) gene from Bartonella quintana.</title>
        <authorList>
            <person name="Marston E.L."/>
            <person name="Eldeieef S."/>
            <person name="Regnery R.L."/>
        </authorList>
    </citation>
    <scope>NUCLEOTIDE SEQUENCE [GENOMIC DNA]</scope>
    <source>
        <strain>ATCC 51694 / 90-268</strain>
    </source>
</reference>
<reference key="2">
    <citation type="journal article" date="2004" name="Proc. Natl. Acad. Sci. U.S.A.">
        <title>The louse-borne human pathogen Bartonella quintana is a genomic derivative of the zoonotic agent Bartonella henselae.</title>
        <authorList>
            <person name="Alsmark U.C.M."/>
            <person name="Frank A.C."/>
            <person name="Karlberg E.O."/>
            <person name="Legault B.-A."/>
            <person name="Ardell D.H."/>
            <person name="Canbaeck B."/>
            <person name="Eriksson A.-S."/>
            <person name="Naeslund A.K."/>
            <person name="Handley S.A."/>
            <person name="Huvet M."/>
            <person name="La Scola B."/>
            <person name="Holmberg M."/>
            <person name="Andersson S.G.E."/>
        </authorList>
    </citation>
    <scope>NUCLEOTIDE SEQUENCE [LARGE SCALE GENOMIC DNA]</scope>
    <source>
        <strain>Toulouse</strain>
    </source>
</reference>
<dbReference type="EMBL" id="AF138286">
    <property type="protein sequence ID" value="AAD39149.1"/>
    <property type="molecule type" value="Genomic_DNA"/>
</dbReference>
<dbReference type="EMBL" id="BX897700">
    <property type="protein sequence ID" value="CAF26189.1"/>
    <property type="molecule type" value="Genomic_DNA"/>
</dbReference>
<dbReference type="RefSeq" id="WP_011179444.1">
    <property type="nucleotide sequence ID" value="NC_005955.1"/>
</dbReference>
<dbReference type="SMR" id="Q9XCM5"/>
<dbReference type="KEGG" id="bqu:BQ07000"/>
<dbReference type="eggNOG" id="COG0264">
    <property type="taxonomic scope" value="Bacteria"/>
</dbReference>
<dbReference type="HOGENOM" id="CLU_047155_2_0_5"/>
<dbReference type="OrthoDB" id="9808348at2"/>
<dbReference type="Proteomes" id="UP000000597">
    <property type="component" value="Chromosome"/>
</dbReference>
<dbReference type="GO" id="GO:0005737">
    <property type="term" value="C:cytoplasm"/>
    <property type="evidence" value="ECO:0007669"/>
    <property type="project" value="UniProtKB-SubCell"/>
</dbReference>
<dbReference type="GO" id="GO:0003746">
    <property type="term" value="F:translation elongation factor activity"/>
    <property type="evidence" value="ECO:0007669"/>
    <property type="project" value="UniProtKB-UniRule"/>
</dbReference>
<dbReference type="CDD" id="cd14275">
    <property type="entry name" value="UBA_EF-Ts"/>
    <property type="match status" value="1"/>
</dbReference>
<dbReference type="FunFam" id="1.10.286.20:FF:000001">
    <property type="entry name" value="Elongation factor Ts"/>
    <property type="match status" value="1"/>
</dbReference>
<dbReference type="FunFam" id="1.10.8.10:FF:000001">
    <property type="entry name" value="Elongation factor Ts"/>
    <property type="match status" value="1"/>
</dbReference>
<dbReference type="Gene3D" id="1.10.286.20">
    <property type="match status" value="1"/>
</dbReference>
<dbReference type="Gene3D" id="1.10.8.10">
    <property type="entry name" value="DNA helicase RuvA subunit, C-terminal domain"/>
    <property type="match status" value="1"/>
</dbReference>
<dbReference type="Gene3D" id="3.30.479.20">
    <property type="entry name" value="Elongation factor Ts, dimerisation domain"/>
    <property type="match status" value="2"/>
</dbReference>
<dbReference type="HAMAP" id="MF_00050">
    <property type="entry name" value="EF_Ts"/>
    <property type="match status" value="1"/>
</dbReference>
<dbReference type="InterPro" id="IPR036402">
    <property type="entry name" value="EF-Ts_dimer_sf"/>
</dbReference>
<dbReference type="InterPro" id="IPR001816">
    <property type="entry name" value="Transl_elong_EFTs/EF1B"/>
</dbReference>
<dbReference type="InterPro" id="IPR014039">
    <property type="entry name" value="Transl_elong_EFTs/EF1B_dimer"/>
</dbReference>
<dbReference type="InterPro" id="IPR018101">
    <property type="entry name" value="Transl_elong_Ts_CS"/>
</dbReference>
<dbReference type="InterPro" id="IPR009060">
    <property type="entry name" value="UBA-like_sf"/>
</dbReference>
<dbReference type="NCBIfam" id="TIGR00116">
    <property type="entry name" value="tsf"/>
    <property type="match status" value="1"/>
</dbReference>
<dbReference type="PANTHER" id="PTHR11741">
    <property type="entry name" value="ELONGATION FACTOR TS"/>
    <property type="match status" value="1"/>
</dbReference>
<dbReference type="PANTHER" id="PTHR11741:SF0">
    <property type="entry name" value="ELONGATION FACTOR TS, MITOCHONDRIAL"/>
    <property type="match status" value="1"/>
</dbReference>
<dbReference type="Pfam" id="PF00889">
    <property type="entry name" value="EF_TS"/>
    <property type="match status" value="1"/>
</dbReference>
<dbReference type="SUPFAM" id="SSF54713">
    <property type="entry name" value="Elongation factor Ts (EF-Ts), dimerisation domain"/>
    <property type="match status" value="1"/>
</dbReference>
<dbReference type="SUPFAM" id="SSF46934">
    <property type="entry name" value="UBA-like"/>
    <property type="match status" value="1"/>
</dbReference>
<dbReference type="PROSITE" id="PS01127">
    <property type="entry name" value="EF_TS_2"/>
    <property type="match status" value="1"/>
</dbReference>
<comment type="function">
    <text evidence="1">Associates with the EF-Tu.GDP complex and induces the exchange of GDP to GTP. It remains bound to the aminoacyl-tRNA.EF-Tu.GTP complex up to the GTP hydrolysis stage on the ribosome (By similarity).</text>
</comment>
<comment type="subcellular location">
    <subcellularLocation>
        <location evidence="1">Cytoplasm</location>
    </subcellularLocation>
</comment>
<comment type="similarity">
    <text evidence="2">Belongs to the EF-Ts family.</text>
</comment>
<organism>
    <name type="scientific">Bartonella quintana (strain Toulouse)</name>
    <name type="common">Rochalimaea quintana</name>
    <dbReference type="NCBI Taxonomy" id="283165"/>
    <lineage>
        <taxon>Bacteria</taxon>
        <taxon>Pseudomonadati</taxon>
        <taxon>Pseudomonadota</taxon>
        <taxon>Alphaproteobacteria</taxon>
        <taxon>Hyphomicrobiales</taxon>
        <taxon>Bartonellaceae</taxon>
        <taxon>Bartonella</taxon>
    </lineage>
</organism>
<sequence length="307" mass="32455">MSITAAQVKELRELSGAGMMDCKAALADTNGDMEAAVDWLRKKGIAKADKKAGRTAAEGLIGIVSKDTSAVLVEINSETDFVARNDLFQDIVRNVATAALDTQGNVESVSASFYPGSEKTVEATIKDAISTIGENMTFRRSAKLSVKDGVVATYIHSKVAEGLGKLGVLVAVETTGNKEAAAVFGRQVAMHIAATNPLALTAEDVDSGAVEREKAIFSDQARQSGKPENIIEKMVEGRLRKFFEEVVLLSQAFVMNPDITVEAALKDAEKSIGAPARITGFIRFALGEGVEKKESNFAAEVAAAAKG</sequence>
<name>EFTS_BARQU</name>
<keyword id="KW-0963">Cytoplasm</keyword>
<keyword id="KW-0251">Elongation factor</keyword>
<keyword id="KW-0648">Protein biosynthesis</keyword>